<reference key="1">
    <citation type="journal article" date="2004" name="PLoS Biol.">
        <title>Phylogenomics of the reproductive parasite Wolbachia pipientis wMel: a streamlined genome overrun by mobile genetic elements.</title>
        <authorList>
            <person name="Wu M."/>
            <person name="Sun L.V."/>
            <person name="Vamathevan J.J."/>
            <person name="Riegler M."/>
            <person name="DeBoy R.T."/>
            <person name="Brownlie J.C."/>
            <person name="McGraw E.A."/>
            <person name="Martin W."/>
            <person name="Esser C."/>
            <person name="Ahmadinejad N."/>
            <person name="Wiegand C."/>
            <person name="Madupu R."/>
            <person name="Beanan M.J."/>
            <person name="Brinkac L.M."/>
            <person name="Daugherty S.C."/>
            <person name="Durkin A.S."/>
            <person name="Kolonay J.F."/>
            <person name="Nelson W.C."/>
            <person name="Mohamoud Y."/>
            <person name="Lee P."/>
            <person name="Berry K.J."/>
            <person name="Young M.B."/>
            <person name="Utterback T.R."/>
            <person name="Weidman J.F."/>
            <person name="Nierman W.C."/>
            <person name="Paulsen I.T."/>
            <person name="Nelson K.E."/>
            <person name="Tettelin H."/>
            <person name="O'Neill S.L."/>
            <person name="Eisen J.A."/>
        </authorList>
    </citation>
    <scope>NUCLEOTIDE SEQUENCE [LARGE SCALE GENOMIC DNA]</scope>
</reference>
<organism>
    <name type="scientific">Wolbachia pipientis wMel</name>
    <dbReference type="NCBI Taxonomy" id="163164"/>
    <lineage>
        <taxon>Bacteria</taxon>
        <taxon>Pseudomonadati</taxon>
        <taxon>Pseudomonadota</taxon>
        <taxon>Alphaproteobacteria</taxon>
        <taxon>Rickettsiales</taxon>
        <taxon>Anaplasmataceae</taxon>
        <taxon>Wolbachieae</taxon>
        <taxon>Wolbachia</taxon>
    </lineage>
</organism>
<proteinExistence type="inferred from homology"/>
<gene>
    <name evidence="1" type="primary">rplR</name>
    <name evidence="1" type="synonym">rpl18</name>
    <name type="ordered locus">WD_0665</name>
</gene>
<dbReference type="EMBL" id="AE017196">
    <property type="protein sequence ID" value="AAS14363.1"/>
    <property type="molecule type" value="Genomic_DNA"/>
</dbReference>
<dbReference type="RefSeq" id="WP_006279867.1">
    <property type="nucleotide sequence ID" value="NZ_OX384529.1"/>
</dbReference>
<dbReference type="SMR" id="Q73HA2"/>
<dbReference type="EnsemblBacteria" id="AAS14363">
    <property type="protein sequence ID" value="AAS14363"/>
    <property type="gene ID" value="WD_0665"/>
</dbReference>
<dbReference type="GeneID" id="70036148"/>
<dbReference type="KEGG" id="wol:WD_0665"/>
<dbReference type="eggNOG" id="COG0256">
    <property type="taxonomic scope" value="Bacteria"/>
</dbReference>
<dbReference type="Proteomes" id="UP000008215">
    <property type="component" value="Chromosome"/>
</dbReference>
<dbReference type="GO" id="GO:0022625">
    <property type="term" value="C:cytosolic large ribosomal subunit"/>
    <property type="evidence" value="ECO:0007669"/>
    <property type="project" value="TreeGrafter"/>
</dbReference>
<dbReference type="GO" id="GO:0008097">
    <property type="term" value="F:5S rRNA binding"/>
    <property type="evidence" value="ECO:0007669"/>
    <property type="project" value="TreeGrafter"/>
</dbReference>
<dbReference type="GO" id="GO:0003735">
    <property type="term" value="F:structural constituent of ribosome"/>
    <property type="evidence" value="ECO:0007669"/>
    <property type="project" value="InterPro"/>
</dbReference>
<dbReference type="GO" id="GO:0006412">
    <property type="term" value="P:translation"/>
    <property type="evidence" value="ECO:0007669"/>
    <property type="project" value="UniProtKB-UniRule"/>
</dbReference>
<dbReference type="CDD" id="cd00432">
    <property type="entry name" value="Ribosomal_L18_L5e"/>
    <property type="match status" value="1"/>
</dbReference>
<dbReference type="Gene3D" id="3.30.420.100">
    <property type="match status" value="1"/>
</dbReference>
<dbReference type="HAMAP" id="MF_01337_B">
    <property type="entry name" value="Ribosomal_uL18_B"/>
    <property type="match status" value="1"/>
</dbReference>
<dbReference type="InterPro" id="IPR004389">
    <property type="entry name" value="Ribosomal_uL18_bac-type"/>
</dbReference>
<dbReference type="InterPro" id="IPR005484">
    <property type="entry name" value="Ribosomal_uL18_bac/euk"/>
</dbReference>
<dbReference type="NCBIfam" id="TIGR00060">
    <property type="entry name" value="L18_bact"/>
    <property type="match status" value="1"/>
</dbReference>
<dbReference type="PANTHER" id="PTHR12899">
    <property type="entry name" value="39S RIBOSOMAL PROTEIN L18, MITOCHONDRIAL"/>
    <property type="match status" value="1"/>
</dbReference>
<dbReference type="PANTHER" id="PTHR12899:SF3">
    <property type="entry name" value="LARGE RIBOSOMAL SUBUNIT PROTEIN UL18M"/>
    <property type="match status" value="1"/>
</dbReference>
<dbReference type="Pfam" id="PF00861">
    <property type="entry name" value="Ribosomal_L18p"/>
    <property type="match status" value="1"/>
</dbReference>
<dbReference type="SUPFAM" id="SSF53137">
    <property type="entry name" value="Translational machinery components"/>
    <property type="match status" value="1"/>
</dbReference>
<sequence length="123" mass="14076">MKRSYNFLSNSEKRKLRNRAKLDKSAERLRISIFKSNRHFYVQLINDVKGITLTSASTLDAKIKDVCKGKVNAETIKQVSSLMVERLSGMKLEQQLTFDRGAYKYTGLVSQFAEALRSSGFEF</sequence>
<name>RL18_WOLPM</name>
<comment type="function">
    <text evidence="1">This is one of the proteins that bind and probably mediate the attachment of the 5S RNA into the large ribosomal subunit, where it forms part of the central protuberance.</text>
</comment>
<comment type="subunit">
    <text evidence="1">Part of the 50S ribosomal subunit; part of the 5S rRNA/L5/L18/L25 subcomplex. Contacts the 5S and 23S rRNAs.</text>
</comment>
<comment type="similarity">
    <text evidence="1">Belongs to the universal ribosomal protein uL18 family.</text>
</comment>
<accession>Q73HA2</accession>
<keyword id="KW-0687">Ribonucleoprotein</keyword>
<keyword id="KW-0689">Ribosomal protein</keyword>
<keyword id="KW-0694">RNA-binding</keyword>
<keyword id="KW-0699">rRNA-binding</keyword>
<evidence type="ECO:0000255" key="1">
    <source>
        <dbReference type="HAMAP-Rule" id="MF_01337"/>
    </source>
</evidence>
<evidence type="ECO:0000305" key="2"/>
<feature type="chain" id="PRO_0000131387" description="Large ribosomal subunit protein uL18">
    <location>
        <begin position="1"/>
        <end position="123"/>
    </location>
</feature>
<protein>
    <recommendedName>
        <fullName evidence="1">Large ribosomal subunit protein uL18</fullName>
    </recommendedName>
    <alternativeName>
        <fullName evidence="2">50S ribosomal protein L18</fullName>
    </alternativeName>
</protein>